<proteinExistence type="inferred from homology"/>
<protein>
    <recommendedName>
        <fullName evidence="1">Probable transaldolase</fullName>
        <ecNumber evidence="1">2.2.1.2</ecNumber>
    </recommendedName>
</protein>
<reference key="1">
    <citation type="submission" date="2007-04" db="EMBL/GenBank/DDBJ databases">
        <title>Complete sequence of Roseiflexus sp. RS-1.</title>
        <authorList>
            <consortium name="US DOE Joint Genome Institute"/>
            <person name="Copeland A."/>
            <person name="Lucas S."/>
            <person name="Lapidus A."/>
            <person name="Barry K."/>
            <person name="Detter J.C."/>
            <person name="Glavina del Rio T."/>
            <person name="Hammon N."/>
            <person name="Israni S."/>
            <person name="Dalin E."/>
            <person name="Tice H."/>
            <person name="Pitluck S."/>
            <person name="Chertkov O."/>
            <person name="Brettin T."/>
            <person name="Bruce D."/>
            <person name="Han C."/>
            <person name="Schmutz J."/>
            <person name="Larimer F."/>
            <person name="Land M."/>
            <person name="Hauser L."/>
            <person name="Kyrpides N."/>
            <person name="Mikhailova N."/>
            <person name="Bryant D.A."/>
            <person name="Richardson P."/>
        </authorList>
    </citation>
    <scope>NUCLEOTIDE SEQUENCE [LARGE SCALE GENOMIC DNA]</scope>
    <source>
        <strain>RS-1</strain>
    </source>
</reference>
<evidence type="ECO:0000255" key="1">
    <source>
        <dbReference type="HAMAP-Rule" id="MF_00494"/>
    </source>
</evidence>
<feature type="chain" id="PRO_1000126353" description="Probable transaldolase">
    <location>
        <begin position="1"/>
        <end position="217"/>
    </location>
</feature>
<feature type="active site" description="Schiff-base intermediate with substrate" evidence="1">
    <location>
        <position position="84"/>
    </location>
</feature>
<accession>A5V243</accession>
<sequence>MQIYLDTANLDEIRTAASWGVLSGVTTNPSLMAKEKGADFKATIQEIASLVDGPISAETTALDADGMVREGREFAAWHPNVVVKVPSTTEGLKAVSRLAREGIRCNVTLCFNAIQALLAARAGAFIISPFVGRVDDVGVDGMDLIREIVQIYRQHRITTLVLAASIRHPRHIVEAALAGADIATCPFKVLEQSMRHPLTDIGIERFLADWKAWQQGK</sequence>
<dbReference type="EC" id="2.2.1.2" evidence="1"/>
<dbReference type="EMBL" id="CP000686">
    <property type="protein sequence ID" value="ABQ92946.1"/>
    <property type="molecule type" value="Genomic_DNA"/>
</dbReference>
<dbReference type="SMR" id="A5V243"/>
<dbReference type="STRING" id="357808.RoseRS_4615"/>
<dbReference type="KEGG" id="rrs:RoseRS_4615"/>
<dbReference type="eggNOG" id="COG0176">
    <property type="taxonomic scope" value="Bacteria"/>
</dbReference>
<dbReference type="HOGENOM" id="CLU_079764_0_0_0"/>
<dbReference type="OrthoDB" id="9807051at2"/>
<dbReference type="UniPathway" id="UPA00115">
    <property type="reaction ID" value="UER00414"/>
</dbReference>
<dbReference type="Proteomes" id="UP000006554">
    <property type="component" value="Chromosome"/>
</dbReference>
<dbReference type="GO" id="GO:0005737">
    <property type="term" value="C:cytoplasm"/>
    <property type="evidence" value="ECO:0007669"/>
    <property type="project" value="UniProtKB-SubCell"/>
</dbReference>
<dbReference type="GO" id="GO:0016832">
    <property type="term" value="F:aldehyde-lyase activity"/>
    <property type="evidence" value="ECO:0007669"/>
    <property type="project" value="InterPro"/>
</dbReference>
<dbReference type="GO" id="GO:0004801">
    <property type="term" value="F:transaldolase activity"/>
    <property type="evidence" value="ECO:0007669"/>
    <property type="project" value="UniProtKB-UniRule"/>
</dbReference>
<dbReference type="GO" id="GO:0005975">
    <property type="term" value="P:carbohydrate metabolic process"/>
    <property type="evidence" value="ECO:0007669"/>
    <property type="project" value="InterPro"/>
</dbReference>
<dbReference type="GO" id="GO:0006098">
    <property type="term" value="P:pentose-phosphate shunt"/>
    <property type="evidence" value="ECO:0007669"/>
    <property type="project" value="UniProtKB-UniRule"/>
</dbReference>
<dbReference type="CDD" id="cd00956">
    <property type="entry name" value="Transaldolase_FSA"/>
    <property type="match status" value="1"/>
</dbReference>
<dbReference type="FunFam" id="3.20.20.70:FF:000018">
    <property type="entry name" value="Probable transaldolase"/>
    <property type="match status" value="1"/>
</dbReference>
<dbReference type="Gene3D" id="3.20.20.70">
    <property type="entry name" value="Aldolase class I"/>
    <property type="match status" value="1"/>
</dbReference>
<dbReference type="HAMAP" id="MF_00494">
    <property type="entry name" value="Transaldolase_3b"/>
    <property type="match status" value="1"/>
</dbReference>
<dbReference type="InterPro" id="IPR013785">
    <property type="entry name" value="Aldolase_TIM"/>
</dbReference>
<dbReference type="InterPro" id="IPR001585">
    <property type="entry name" value="TAL/FSA"/>
</dbReference>
<dbReference type="InterPro" id="IPR022999">
    <property type="entry name" value="Transaldolase_3B"/>
</dbReference>
<dbReference type="InterPro" id="IPR004731">
    <property type="entry name" value="Transaldolase_3B/F6P_aldolase"/>
</dbReference>
<dbReference type="InterPro" id="IPR018225">
    <property type="entry name" value="Transaldolase_AS"/>
</dbReference>
<dbReference type="InterPro" id="IPR033919">
    <property type="entry name" value="TSA/FSA_arc/bac"/>
</dbReference>
<dbReference type="NCBIfam" id="TIGR00875">
    <property type="entry name" value="fsa_talC_mipB"/>
    <property type="match status" value="1"/>
</dbReference>
<dbReference type="PANTHER" id="PTHR10683:SF40">
    <property type="entry name" value="FRUCTOSE-6-PHOSPHATE ALDOLASE 1-RELATED"/>
    <property type="match status" value="1"/>
</dbReference>
<dbReference type="PANTHER" id="PTHR10683">
    <property type="entry name" value="TRANSALDOLASE"/>
    <property type="match status" value="1"/>
</dbReference>
<dbReference type="Pfam" id="PF00923">
    <property type="entry name" value="TAL_FSA"/>
    <property type="match status" value="1"/>
</dbReference>
<dbReference type="SUPFAM" id="SSF51569">
    <property type="entry name" value="Aldolase"/>
    <property type="match status" value="1"/>
</dbReference>
<dbReference type="PROSITE" id="PS01054">
    <property type="entry name" value="TRANSALDOLASE_1"/>
    <property type="match status" value="1"/>
</dbReference>
<dbReference type="PROSITE" id="PS00958">
    <property type="entry name" value="TRANSALDOLASE_2"/>
    <property type="match status" value="1"/>
</dbReference>
<organism>
    <name type="scientific">Roseiflexus sp. (strain RS-1)</name>
    <dbReference type="NCBI Taxonomy" id="357808"/>
    <lineage>
        <taxon>Bacteria</taxon>
        <taxon>Bacillati</taxon>
        <taxon>Chloroflexota</taxon>
        <taxon>Chloroflexia</taxon>
        <taxon>Chloroflexales</taxon>
        <taxon>Roseiflexineae</taxon>
        <taxon>Roseiflexaceae</taxon>
        <taxon>Roseiflexus</taxon>
    </lineage>
</organism>
<name>TAL_ROSS1</name>
<keyword id="KW-0963">Cytoplasm</keyword>
<keyword id="KW-0570">Pentose shunt</keyword>
<keyword id="KW-0704">Schiff base</keyword>
<keyword id="KW-0808">Transferase</keyword>
<gene>
    <name evidence="1" type="primary">tal</name>
    <name type="ordered locus">RoseRS_4615</name>
</gene>
<comment type="function">
    <text evidence="1">Transaldolase is important for the balance of metabolites in the pentose-phosphate pathway.</text>
</comment>
<comment type="catalytic activity">
    <reaction evidence="1">
        <text>D-sedoheptulose 7-phosphate + D-glyceraldehyde 3-phosphate = D-erythrose 4-phosphate + beta-D-fructose 6-phosphate</text>
        <dbReference type="Rhea" id="RHEA:17053"/>
        <dbReference type="ChEBI" id="CHEBI:16897"/>
        <dbReference type="ChEBI" id="CHEBI:57483"/>
        <dbReference type="ChEBI" id="CHEBI:57634"/>
        <dbReference type="ChEBI" id="CHEBI:59776"/>
        <dbReference type="EC" id="2.2.1.2"/>
    </reaction>
</comment>
<comment type="pathway">
    <text evidence="1">Carbohydrate degradation; pentose phosphate pathway; D-glyceraldehyde 3-phosphate and beta-D-fructose 6-phosphate from D-ribose 5-phosphate and D-xylulose 5-phosphate (non-oxidative stage): step 2/3.</text>
</comment>
<comment type="subcellular location">
    <subcellularLocation>
        <location evidence="1">Cytoplasm</location>
    </subcellularLocation>
</comment>
<comment type="similarity">
    <text evidence="1">Belongs to the transaldolase family. Type 3B subfamily.</text>
</comment>